<keyword id="KW-1003">Cell membrane</keyword>
<keyword id="KW-0472">Membrane</keyword>
<keyword id="KW-1185">Reference proteome</keyword>
<keyword id="KW-0812">Transmembrane</keyword>
<keyword id="KW-1133">Transmembrane helix</keyword>
<keyword id="KW-0813">Transport</keyword>
<keyword id="KW-0926">Vacuole</keyword>
<gene>
    <name evidence="8" type="primary">patC</name>
    <name type="ORF">ACLA_093580</name>
</gene>
<reference key="1">
    <citation type="journal article" date="2008" name="PLoS Genet.">
        <title>Genomic islands in the pathogenic filamentous fungus Aspergillus fumigatus.</title>
        <authorList>
            <person name="Fedorova N.D."/>
            <person name="Khaldi N."/>
            <person name="Joardar V.S."/>
            <person name="Maiti R."/>
            <person name="Amedeo P."/>
            <person name="Anderson M.J."/>
            <person name="Crabtree J."/>
            <person name="Silva J.C."/>
            <person name="Badger J.H."/>
            <person name="Albarraq A."/>
            <person name="Angiuoli S."/>
            <person name="Bussey H."/>
            <person name="Bowyer P."/>
            <person name="Cotty P.J."/>
            <person name="Dyer P.S."/>
            <person name="Egan A."/>
            <person name="Galens K."/>
            <person name="Fraser-Liggett C.M."/>
            <person name="Haas B.J."/>
            <person name="Inman J.M."/>
            <person name="Kent R."/>
            <person name="Lemieux S."/>
            <person name="Malavazi I."/>
            <person name="Orvis J."/>
            <person name="Roemer T."/>
            <person name="Ronning C.M."/>
            <person name="Sundaram J.P."/>
            <person name="Sutton G."/>
            <person name="Turner G."/>
            <person name="Venter J.C."/>
            <person name="White O.R."/>
            <person name="Whitty B.R."/>
            <person name="Youngman P."/>
            <person name="Wolfe K.H."/>
            <person name="Goldman G.H."/>
            <person name="Wortman J.R."/>
            <person name="Jiang B."/>
            <person name="Denning D.W."/>
            <person name="Nierman W.C."/>
        </authorList>
    </citation>
    <scope>NUCLEOTIDE SEQUENCE [LARGE SCALE GENOMIC DNA]</scope>
    <source>
        <strain>ATCC 1007 / CBS 513.65 / DSM 816 / NCTC 3887 / NRRL 1 / QM 1276 / 107</strain>
    </source>
</reference>
<reference key="2">
    <citation type="journal article" date="2004" name="Int. J. Epidemiol.">
        <title>Clinical trial of patulin in the common cold. 1944.</title>
        <authorList>
            <consortium name="Patulin Clinical Trials Committee, Medical Research Council"/>
        </authorList>
    </citation>
    <scope>BIOTECHNOLOGY</scope>
</reference>
<reference key="3">
    <citation type="journal article" date="2009" name="Microbiology">
        <title>Molecular cloning and functional characterization of two CYP619 cytochrome P450s involved in biosynthesis of patulin in Aspergillus clavatus.</title>
        <authorList>
            <person name="Artigot M.P."/>
            <person name="Loiseau N."/>
            <person name="Laffitte J."/>
            <person name="Mas-Reguieg L."/>
            <person name="Tadrist S."/>
            <person name="Oswald I.P."/>
            <person name="Puel O."/>
        </authorList>
    </citation>
    <scope>FUNCTION</scope>
</reference>
<reference key="4">
    <citation type="journal article" date="2012" name="Food Chem. Toxicol.">
        <title>DNA damage in organs of mice treated acutely with patulin, a known mycotoxin.</title>
        <authorList>
            <person name="de Melo F.T."/>
            <person name="de Oliveira I.M."/>
            <person name="Greggio S."/>
            <person name="Dacosta J.C."/>
            <person name="Guecheva T.N."/>
            <person name="Saffi J."/>
            <person name="Henriques J.A."/>
            <person name="Rosa R.M."/>
        </authorList>
    </citation>
    <scope>BIOTECHNOLOGY</scope>
</reference>
<reference key="5">
    <citation type="journal article" date="2014" name="Int. J. Food Microbiol.">
        <title>The gene PatG involved in the biosynthesis pathway of patulin, a food-borne mycotoxin, encodes a 6-methylsalicylic acid decarboxylase.</title>
        <authorList>
            <person name="Snini S.P."/>
            <person name="Tadrist S."/>
            <person name="Laffitte J."/>
            <person name="Jamin E.L."/>
            <person name="Oswald I.P."/>
            <person name="Puel O."/>
        </authorList>
    </citation>
    <scope>FUNCTION</scope>
</reference>
<reference key="6">
    <citation type="journal article" date="2016" name="Tumor Biol.">
        <title>The potential effect of patulin on mice bearing melanoma cells: an anti-tumour or carcinogenic effect?</title>
        <authorList>
            <person name="Boussabbeh M."/>
            <person name="Ben Salem I."/>
            <person name="Rjiba-Touati K."/>
            <person name="Bouyahya C."/>
            <person name="Neffati F."/>
            <person name="Najjar M.F."/>
            <person name="Bacha H."/>
            <person name="Abid-Essefi S."/>
        </authorList>
    </citation>
    <scope>BIOTECHNOLOGY</scope>
</reference>
<organism>
    <name type="scientific">Aspergillus clavatus (strain ATCC 1007 / CBS 513.65 / DSM 816 / NCTC 3887 / NRRL 1 / QM 1276 / 107)</name>
    <dbReference type="NCBI Taxonomy" id="344612"/>
    <lineage>
        <taxon>Eukaryota</taxon>
        <taxon>Fungi</taxon>
        <taxon>Dikarya</taxon>
        <taxon>Ascomycota</taxon>
        <taxon>Pezizomycotina</taxon>
        <taxon>Eurotiomycetes</taxon>
        <taxon>Eurotiomycetidae</taxon>
        <taxon>Eurotiales</taxon>
        <taxon>Aspergillaceae</taxon>
        <taxon>Aspergillus</taxon>
        <taxon>Aspergillus subgen. Fumigati</taxon>
    </lineage>
</organism>
<name>PATC_ASPCL</name>
<dbReference type="EMBL" id="DS027052">
    <property type="protein sequence ID" value="EAW11659.1"/>
    <property type="molecule type" value="Genomic_DNA"/>
</dbReference>
<dbReference type="RefSeq" id="XP_001273085.1">
    <property type="nucleotide sequence ID" value="XM_001273084.1"/>
</dbReference>
<dbReference type="SMR" id="A1CFL0"/>
<dbReference type="STRING" id="344612.A1CFL0"/>
<dbReference type="EnsemblFungi" id="EAW11659">
    <property type="protein sequence ID" value="EAW11659"/>
    <property type="gene ID" value="ACLA_093580"/>
</dbReference>
<dbReference type="GeneID" id="4704865"/>
<dbReference type="KEGG" id="act:ACLA_093580"/>
<dbReference type="VEuPathDB" id="FungiDB:ACLA_093580"/>
<dbReference type="eggNOG" id="KOG0254">
    <property type="taxonomic scope" value="Eukaryota"/>
</dbReference>
<dbReference type="HOGENOM" id="CLU_000960_22_1_1"/>
<dbReference type="OMA" id="DVYVMAI"/>
<dbReference type="OrthoDB" id="10021397at2759"/>
<dbReference type="Proteomes" id="UP000006701">
    <property type="component" value="Unassembled WGS sequence"/>
</dbReference>
<dbReference type="GO" id="GO:0005886">
    <property type="term" value="C:plasma membrane"/>
    <property type="evidence" value="ECO:0000250"/>
    <property type="project" value="GO_Central"/>
</dbReference>
<dbReference type="GO" id="GO:0005774">
    <property type="term" value="C:vacuolar membrane"/>
    <property type="evidence" value="ECO:0000250"/>
    <property type="project" value="GO_Central"/>
</dbReference>
<dbReference type="GO" id="GO:0022857">
    <property type="term" value="F:transmembrane transporter activity"/>
    <property type="evidence" value="ECO:0007669"/>
    <property type="project" value="InterPro"/>
</dbReference>
<dbReference type="GO" id="GO:0140723">
    <property type="term" value="P:patulin biosynthetic process"/>
    <property type="evidence" value="ECO:0000250"/>
    <property type="project" value="GO_Central"/>
</dbReference>
<dbReference type="CDD" id="cd17502">
    <property type="entry name" value="MFS_Azr1_MDR_like"/>
    <property type="match status" value="1"/>
</dbReference>
<dbReference type="Gene3D" id="1.20.1250.20">
    <property type="entry name" value="MFS general substrate transporter like domains"/>
    <property type="match status" value="2"/>
</dbReference>
<dbReference type="InterPro" id="IPR011701">
    <property type="entry name" value="MFS"/>
</dbReference>
<dbReference type="InterPro" id="IPR020846">
    <property type="entry name" value="MFS_dom"/>
</dbReference>
<dbReference type="InterPro" id="IPR036259">
    <property type="entry name" value="MFS_trans_sf"/>
</dbReference>
<dbReference type="PANTHER" id="PTHR23501">
    <property type="entry name" value="MAJOR FACILITATOR SUPERFAMILY"/>
    <property type="match status" value="1"/>
</dbReference>
<dbReference type="PANTHER" id="PTHR23501:SF12">
    <property type="entry name" value="MAJOR FACILITATOR SUPERFAMILY (MFS) PROFILE DOMAIN-CONTAINING PROTEIN-RELATED"/>
    <property type="match status" value="1"/>
</dbReference>
<dbReference type="Pfam" id="PF07690">
    <property type="entry name" value="MFS_1"/>
    <property type="match status" value="1"/>
</dbReference>
<dbReference type="SUPFAM" id="SSF103473">
    <property type="entry name" value="MFS general substrate transporter"/>
    <property type="match status" value="1"/>
</dbReference>
<dbReference type="PROSITE" id="PS50850">
    <property type="entry name" value="MFS"/>
    <property type="match status" value="1"/>
</dbReference>
<feature type="chain" id="PRO_0000437113" description="Efflux pump patC">
    <location>
        <begin position="1"/>
        <end position="549"/>
    </location>
</feature>
<feature type="transmembrane region" description="Helical" evidence="2">
    <location>
        <begin position="50"/>
        <end position="70"/>
    </location>
</feature>
<feature type="transmembrane region" description="Helical" evidence="2">
    <location>
        <begin position="85"/>
        <end position="105"/>
    </location>
</feature>
<feature type="transmembrane region" description="Helical" evidence="2">
    <location>
        <begin position="116"/>
        <end position="136"/>
    </location>
</feature>
<feature type="transmembrane region" description="Helical" evidence="2">
    <location>
        <begin position="146"/>
        <end position="166"/>
    </location>
</feature>
<feature type="transmembrane region" description="Helical" evidence="2">
    <location>
        <begin position="178"/>
        <end position="198"/>
    </location>
</feature>
<feature type="transmembrane region" description="Helical" evidence="2">
    <location>
        <begin position="206"/>
        <end position="226"/>
    </location>
</feature>
<feature type="transmembrane region" description="Helical" evidence="2">
    <location>
        <begin position="252"/>
        <end position="272"/>
    </location>
</feature>
<feature type="transmembrane region" description="Helical" evidence="2">
    <location>
        <begin position="282"/>
        <end position="302"/>
    </location>
</feature>
<feature type="transmembrane region" description="Helical" evidence="2">
    <location>
        <begin position="321"/>
        <end position="341"/>
    </location>
</feature>
<feature type="transmembrane region" description="Helical" evidence="2">
    <location>
        <begin position="360"/>
        <end position="380"/>
    </location>
</feature>
<feature type="transmembrane region" description="Helical" evidence="2">
    <location>
        <begin position="385"/>
        <end position="405"/>
    </location>
</feature>
<feature type="transmembrane region" description="Helical" evidence="2">
    <location>
        <begin position="419"/>
        <end position="439"/>
    </location>
</feature>
<feature type="transmembrane region" description="Helical" evidence="2">
    <location>
        <begin position="460"/>
        <end position="482"/>
    </location>
</feature>
<feature type="transmembrane region" description="Helical" evidence="2">
    <location>
        <begin position="526"/>
        <end position="546"/>
    </location>
</feature>
<feature type="region of interest" description="Disordered" evidence="3">
    <location>
        <begin position="1"/>
        <end position="40"/>
    </location>
</feature>
<feature type="compositionally biased region" description="Polar residues" evidence="3">
    <location>
        <begin position="1"/>
        <end position="12"/>
    </location>
</feature>
<accession>A1CFL0</accession>
<protein>
    <recommendedName>
        <fullName evidence="8">Efflux pump patC</fullName>
    </recommendedName>
    <alternativeName>
        <fullName evidence="8">Patulin synthesis protein C</fullName>
    </alternativeName>
</protein>
<proteinExistence type="evidence at protein level"/>
<comment type="function">
    <text evidence="1 5">Efflux pump; part of the gene cluster that mediates the biosynthesis of patulin, an acetate-derived tetraketide mycotoxin produced by several fungal species that shows antimicrobial properties against several bacteria (PubMed:19383676). May be involved in the secretion of E-ascladiol to be converted to patulin by the secreted patulin synthase patE (By similarity).</text>
</comment>
<comment type="subcellular location">
    <subcellularLocation>
        <location evidence="1">Vacuole membrane</location>
        <topology evidence="2">Multi-pass membrane protein</topology>
    </subcellularLocation>
    <subcellularLocation>
        <location evidence="1">Cell membrane</location>
        <topology evidence="2">Multi-pass membrane protein</topology>
    </subcellularLocation>
</comment>
<comment type="biotechnology">
    <text evidence="4 6 7">Patulin was originally used as an antibiotic and specifically trialed to be used against the common cold, but it is no longer used for that purpose since it has been shown to induce immunological, neurological and gastrointestinal effects (PubMed:15082620). Genotoxic effects of patulin with dose-dependent increase in DNA strand breaks in brain, liver and kidneys have been detected in mice (PubMed:22222931). However, more recently, it has been proposed that patulin might also have anti-tumor properties (PubMed:26619846).</text>
</comment>
<comment type="similarity">
    <text evidence="9">Belongs to the major facilitator superfamily. TCR/Tet family.</text>
</comment>
<evidence type="ECO:0000250" key="1">
    <source>
        <dbReference type="UniProtKB" id="A0A075TRA9"/>
    </source>
</evidence>
<evidence type="ECO:0000255" key="2"/>
<evidence type="ECO:0000256" key="3">
    <source>
        <dbReference type="SAM" id="MobiDB-lite"/>
    </source>
</evidence>
<evidence type="ECO:0000269" key="4">
    <source>
    </source>
</evidence>
<evidence type="ECO:0000269" key="5">
    <source>
    </source>
</evidence>
<evidence type="ECO:0000269" key="6">
    <source>
    </source>
</evidence>
<evidence type="ECO:0000269" key="7">
    <source>
    </source>
</evidence>
<evidence type="ECO:0000303" key="8">
    <source>
    </source>
</evidence>
<evidence type="ECO:0000305" key="9"/>
<sequence length="549" mass="59113">MAESTAHTSPSLNDKEREVDQGILSDESGPAEEVKETPDQERSVQGVRWLLICIAVFSANLLYGLDNTIVADIQGAVAGTFEEYAQLGWLGVGFTLGSVVFILPLGKAYAIFDTKWLFIGCLTMFAAGSALCGGAPNMDAIIVGRVWAGAGGAGMYLGNLNLITILTTPKEQPVYVGLVGLIYGVGCILGPIIGGAFADSSATWRWGFYINLIIFGIMAPIYVFLLPSLPRPAGEGRSFINRLRELDWVGTVLSAGMHVSFILFIVFGGVMWPWTDGRNIALYVVAAVTLIAFALSQYFCVLTDKENRLFPGEFLRNPTMIALYVLMACGGAALFVAVYYIPLYFQFVHGDSGIMSAVRLLPFICFYVATILLCGWLMPKTGYYVLWYLLSGIFMVIGSATMYTVKYDTKVANIYGYSILLGLGMATTQAAYAVGPSLVTPDRVAESIQFMNIGQGQSQLLGLAIASAIFQSETLSGLNALLAGKGYSQGDIQGAIAGARSTLLTELPADLKTKALDVIVHSIDDVYVMAIAAGALYVIASCFLPWRRF</sequence>